<reference key="1">
    <citation type="submission" date="2005-09" db="EMBL/GenBank/DDBJ databases">
        <authorList>
            <person name="Mural R.J."/>
            <person name="Adams M.D."/>
            <person name="Myers E.W."/>
            <person name="Smith H.O."/>
            <person name="Venter J.C."/>
        </authorList>
    </citation>
    <scope>NUCLEOTIDE SEQUENCE [LARGE SCALE GENOMIC DNA]</scope>
    <source>
        <strain>Brown Norway</strain>
    </source>
</reference>
<reference key="2">
    <citation type="journal article" date="2004" name="Genome Res.">
        <title>The status, quality, and expansion of the NIH full-length cDNA project: the Mammalian Gene Collection (MGC).</title>
        <authorList>
            <consortium name="The MGC Project Team"/>
        </authorList>
    </citation>
    <scope>NUCLEOTIDE SEQUENCE [LARGE SCALE MRNA]</scope>
    <source>
        <tissue>Prostate</tissue>
    </source>
</reference>
<gene>
    <name type="primary">Ifi30</name>
</gene>
<feature type="signal peptide" evidence="3">
    <location>
        <begin position="1"/>
        <end position="24"/>
    </location>
</feature>
<feature type="propeptide" id="PRO_0000406227" description="Removed in mature form" evidence="2">
    <location>
        <begin position="25"/>
        <end position="54"/>
    </location>
</feature>
<feature type="chain" id="PRO_0000406228" description="Gamma-interferon-inducible lysosomal thiol reductase">
    <location>
        <begin position="55"/>
        <end position="230"/>
    </location>
</feature>
<feature type="propeptide" id="PRO_0000406229" description="Removed in mature form" evidence="2">
    <location>
        <begin position="231"/>
        <end position="248"/>
    </location>
</feature>
<feature type="glycosylation site" description="N-linked (GlcNAc...) asparagine" evidence="3">
    <location>
        <position position="60"/>
    </location>
</feature>
<feature type="glycosylation site" description="N-linked (GlcNAc...) asparagine" evidence="3">
    <location>
        <position position="92"/>
    </location>
</feature>
<feature type="glycosylation site" description="N-linked (GlcNAc...) asparagine" evidence="3">
    <location>
        <position position="105"/>
    </location>
</feature>
<feature type="disulfide bond" description="Redox-active" evidence="2">
    <location>
        <begin position="69"/>
        <end position="72"/>
    </location>
</feature>
<evidence type="ECO:0000250" key="1"/>
<evidence type="ECO:0000250" key="2">
    <source>
        <dbReference type="UniProtKB" id="P13284"/>
    </source>
</evidence>
<evidence type="ECO:0000255" key="3"/>
<evidence type="ECO:0000305" key="4"/>
<comment type="function">
    <text evidence="1">Lysosomal thiol reductase that can reduce protein disulfide bonds. May facilitate the complete unfolding of proteins destined for lysosomal degradation. Plays an important role in antigen processing. Facilitates the generation of MHC class II-restricted epitodes from disulfide bond-containing antigen by the endocytic reduction of disulfide bonds. Also facilitates MHC class I-restricted recognition of exogenous antigens containing disulfide bonds by CD8+ T-cells or crosspresentation (By similarity).</text>
</comment>
<comment type="subunit">
    <text evidence="1">Dimer; disulfide-linked.</text>
</comment>
<comment type="subcellular location">
    <subcellularLocation>
        <location evidence="1">Secreted</location>
    </subcellularLocation>
    <subcellularLocation>
        <location evidence="1">Lysosome</location>
    </subcellularLocation>
</comment>
<comment type="PTM">
    <text evidence="1">N-glycosylated. Sugar chains contain mannose-6-phosphate (By similarity).</text>
</comment>
<comment type="PTM">
    <text evidence="1">Synthesized as a 35 kDa precursor which is then processed into the mature 30 kDa form via cleavage of N-terminal and C-terminal propeptides. Processing of the precursor is mediated by multiple lysosomal proteases (By similarity).</text>
</comment>
<comment type="miscellaneous">
    <text evidence="1">Both precursor form and mature form have thiol reductase activity.</text>
</comment>
<comment type="similarity">
    <text evidence="4">Belongs to the GILT family.</text>
</comment>
<accession>Q499T2</accession>
<accession>Q5I0J7</accession>
<keyword id="KW-1015">Disulfide bond</keyword>
<keyword id="KW-0325">Glycoprotein</keyword>
<keyword id="KW-0391">Immunity</keyword>
<keyword id="KW-0458">Lysosome</keyword>
<keyword id="KW-0560">Oxidoreductase</keyword>
<keyword id="KW-0676">Redox-active center</keyword>
<keyword id="KW-1185">Reference proteome</keyword>
<keyword id="KW-0964">Secreted</keyword>
<keyword id="KW-0732">Signal</keyword>
<protein>
    <recommendedName>
        <fullName>Gamma-interferon-inducible lysosomal thiol reductase</fullName>
        <ecNumber evidence="2">1.8.-.-</ecNumber>
    </recommendedName>
    <alternativeName>
        <fullName>Interferon gamma inducible protein 30</fullName>
    </alternativeName>
</protein>
<dbReference type="EC" id="1.8.-.-" evidence="2"/>
<dbReference type="EMBL" id="CH474031">
    <property type="protein sequence ID" value="EDL90735.1"/>
    <property type="molecule type" value="Genomic_DNA"/>
</dbReference>
<dbReference type="EMBL" id="BC099774">
    <property type="protein sequence ID" value="AAH99774.1"/>
    <property type="molecule type" value="mRNA"/>
</dbReference>
<dbReference type="EMBL" id="BC088256">
    <property type="protein sequence ID" value="AAH88256.1"/>
    <property type="molecule type" value="mRNA"/>
</dbReference>
<dbReference type="RefSeq" id="NP_001025197.1">
    <property type="nucleotide sequence ID" value="NM_001030026.2"/>
</dbReference>
<dbReference type="SMR" id="Q499T2"/>
<dbReference type="FunCoup" id="Q499T2">
    <property type="interactions" value="357"/>
</dbReference>
<dbReference type="STRING" id="10116.ENSRNOP00000026225"/>
<dbReference type="GlyCosmos" id="Q499T2">
    <property type="glycosylation" value="3 sites, No reported glycans"/>
</dbReference>
<dbReference type="GlyGen" id="Q499T2">
    <property type="glycosylation" value="3 sites"/>
</dbReference>
<dbReference type="PhosphoSitePlus" id="Q499T2"/>
<dbReference type="PaxDb" id="10116-ENSRNOP00000026225"/>
<dbReference type="Ensembl" id="ENSRNOT00000026225.8">
    <property type="protein sequence ID" value="ENSRNOP00000026225.4"/>
    <property type="gene ID" value="ENSRNOG00000019387.8"/>
</dbReference>
<dbReference type="GeneID" id="290644"/>
<dbReference type="KEGG" id="rno:290644"/>
<dbReference type="AGR" id="RGD:1310758"/>
<dbReference type="CTD" id="10437"/>
<dbReference type="RGD" id="1310758">
    <property type="gene designation" value="Ifi30"/>
</dbReference>
<dbReference type="eggNOG" id="KOG3160">
    <property type="taxonomic scope" value="Eukaryota"/>
</dbReference>
<dbReference type="GeneTree" id="ENSGT00390000010450"/>
<dbReference type="HOGENOM" id="CLU_066886_0_0_1"/>
<dbReference type="InParanoid" id="Q499T2"/>
<dbReference type="OMA" id="SHKEVCF"/>
<dbReference type="OrthoDB" id="958254at2759"/>
<dbReference type="PhylomeDB" id="Q499T2"/>
<dbReference type="TreeFam" id="TF315141"/>
<dbReference type="Reactome" id="R-RNO-2132295">
    <property type="pathway name" value="MHC class II antigen presentation"/>
</dbReference>
<dbReference type="PRO" id="PR:Q499T2"/>
<dbReference type="Proteomes" id="UP000002494">
    <property type="component" value="Chromosome 16"/>
</dbReference>
<dbReference type="Proteomes" id="UP000234681">
    <property type="component" value="Chromosome 16"/>
</dbReference>
<dbReference type="Bgee" id="ENSRNOG00000019387">
    <property type="expression patterns" value="Expressed in spleen and 19 other cell types or tissues"/>
</dbReference>
<dbReference type="GO" id="GO:0030054">
    <property type="term" value="C:cell junction"/>
    <property type="evidence" value="ECO:0007669"/>
    <property type="project" value="Ensembl"/>
</dbReference>
<dbReference type="GO" id="GO:0005829">
    <property type="term" value="C:cytosol"/>
    <property type="evidence" value="ECO:0007669"/>
    <property type="project" value="Ensembl"/>
</dbReference>
<dbReference type="GO" id="GO:0005576">
    <property type="term" value="C:extracellular region"/>
    <property type="evidence" value="ECO:0007669"/>
    <property type="project" value="UniProtKB-SubCell"/>
</dbReference>
<dbReference type="GO" id="GO:0005764">
    <property type="term" value="C:lysosome"/>
    <property type="evidence" value="ECO:0000250"/>
    <property type="project" value="UniProtKB"/>
</dbReference>
<dbReference type="GO" id="GO:0016667">
    <property type="term" value="F:oxidoreductase activity, acting on a sulfur group of donors"/>
    <property type="evidence" value="ECO:0000250"/>
    <property type="project" value="UniProtKB"/>
</dbReference>
<dbReference type="GO" id="GO:0016671">
    <property type="term" value="F:oxidoreductase activity, acting on a sulfur group of donors, disulfide as acceptor"/>
    <property type="evidence" value="ECO:0007669"/>
    <property type="project" value="InterPro"/>
</dbReference>
<dbReference type="GO" id="GO:0042590">
    <property type="term" value="P:antigen processing and presentation of exogenous peptide antigen via MHC class I"/>
    <property type="evidence" value="ECO:0000250"/>
    <property type="project" value="UniProtKB"/>
</dbReference>
<dbReference type="GO" id="GO:0019886">
    <property type="term" value="P:antigen processing and presentation of exogenous peptide antigen via MHC class II"/>
    <property type="evidence" value="ECO:0000266"/>
    <property type="project" value="RGD"/>
</dbReference>
<dbReference type="GO" id="GO:0048147">
    <property type="term" value="P:negative regulation of fibroblast proliferation"/>
    <property type="evidence" value="ECO:0000266"/>
    <property type="project" value="RGD"/>
</dbReference>
<dbReference type="GO" id="GO:0050821">
    <property type="term" value="P:protein stabilization"/>
    <property type="evidence" value="ECO:0000266"/>
    <property type="project" value="RGD"/>
</dbReference>
<dbReference type="InterPro" id="IPR004911">
    <property type="entry name" value="Interferon-induced_GILT"/>
</dbReference>
<dbReference type="PANTHER" id="PTHR13234">
    <property type="entry name" value="GAMMA-INTERFERON INDUCIBLE LYSOSOMAL THIOL REDUCTASE GILT"/>
    <property type="match status" value="1"/>
</dbReference>
<dbReference type="PANTHER" id="PTHR13234:SF8">
    <property type="entry name" value="GAMMA-INTERFERON-INDUCIBLE LYSOSOMAL THIOL REDUCTASE"/>
    <property type="match status" value="1"/>
</dbReference>
<dbReference type="Pfam" id="PF03227">
    <property type="entry name" value="GILT"/>
    <property type="match status" value="1"/>
</dbReference>
<proteinExistence type="evidence at transcript level"/>
<sequence length="248" mass="27644">MSCSPLVPFLSLLLLLFLPEVPRAATASLPQGSSEGAATCKAHDLCLFGPRRLLSAPPVNVSLYYESLCGACRYFLVRNLFPTWLMVMEIMNITLVPYGNAQERNVSGTWEFTCQHGELECKLNKVEACLLDKLEKEAAFLTIVCMEEMEDMEKKLGPCLQLYVPEVSPESIMECATGKRGTELMHENAQLTDALQPPHEYVPWVLVNEKPLTDPSQLLSSVCELYQGTEKPDICSSMADAPREVCYK</sequence>
<organism>
    <name type="scientific">Rattus norvegicus</name>
    <name type="common">Rat</name>
    <dbReference type="NCBI Taxonomy" id="10116"/>
    <lineage>
        <taxon>Eukaryota</taxon>
        <taxon>Metazoa</taxon>
        <taxon>Chordata</taxon>
        <taxon>Craniata</taxon>
        <taxon>Vertebrata</taxon>
        <taxon>Euteleostomi</taxon>
        <taxon>Mammalia</taxon>
        <taxon>Eutheria</taxon>
        <taxon>Euarchontoglires</taxon>
        <taxon>Glires</taxon>
        <taxon>Rodentia</taxon>
        <taxon>Myomorpha</taxon>
        <taxon>Muroidea</taxon>
        <taxon>Muridae</taxon>
        <taxon>Murinae</taxon>
        <taxon>Rattus</taxon>
    </lineage>
</organism>
<name>GILT_RAT</name>